<accession>Q8IWT0</accession>
<accession>Q5TGK5</accession>
<accession>Q6PDA1</accession>
<accession>Q8IWS9</accession>
<accession>Q8NEV6</accession>
<accession>Q8NEV7</accession>
<evidence type="ECO:0000250" key="1"/>
<evidence type="ECO:0000269" key="2">
    <source>
    </source>
</evidence>
<evidence type="ECO:0000303" key="3">
    <source>
    </source>
</evidence>
<evidence type="ECO:0000303" key="4">
    <source ref="1"/>
</evidence>
<evidence type="ECO:0000305" key="5"/>
<evidence type="ECO:0007744" key="6">
    <source>
    </source>
</evidence>
<keyword id="KW-0007">Acetylation</keyword>
<keyword id="KW-0025">Alternative splicing</keyword>
<keyword id="KW-0106">Calcium</keyword>
<keyword id="KW-0479">Metal-binding</keyword>
<keyword id="KW-1267">Proteomics identification</keyword>
<keyword id="KW-1185">Reference proteome</keyword>
<keyword id="KW-0819">tRNA processing</keyword>
<gene>
    <name type="primary">ZBTB8OS</name>
    <name type="synonym">ARCH</name>
</gene>
<organism>
    <name type="scientific">Homo sapiens</name>
    <name type="common">Human</name>
    <dbReference type="NCBI Taxonomy" id="9606"/>
    <lineage>
        <taxon>Eukaryota</taxon>
        <taxon>Metazoa</taxon>
        <taxon>Chordata</taxon>
        <taxon>Craniata</taxon>
        <taxon>Vertebrata</taxon>
        <taxon>Euteleostomi</taxon>
        <taxon>Mammalia</taxon>
        <taxon>Eutheria</taxon>
        <taxon>Euarchontoglires</taxon>
        <taxon>Primates</taxon>
        <taxon>Haplorrhini</taxon>
        <taxon>Catarrhini</taxon>
        <taxon>Hominidae</taxon>
        <taxon>Homo</taxon>
    </lineage>
</organism>
<protein>
    <recommendedName>
        <fullName>Protein archease</fullName>
    </recommendedName>
    <alternativeName>
        <fullName>Protein ZBTB8OS</fullName>
    </alternativeName>
    <alternativeName>
        <fullName>Zinc finger and BTB domain-containing opposite strand protein 8</fullName>
    </alternativeName>
</protein>
<sequence>MAQEEEDVRDYNLTEEQKAIKAKYPPVNRKYEYLDHTADVQLHAWGDTLEEAFEQCAMAMFGYMTDTGTVEPLQTVEVETQGDDLQSLLFHFLDEWLYKFSADEFFIPREVKVLSIDQRNFKLRSIGWGEEFSLSKHPQGTEVKAITYSAMQVYNEENPEVFVIIDI</sequence>
<comment type="function">
    <text evidence="2">Component of the tRNA-splicing ligase complex required to facilitate the enzymatic turnover of catalytic subunit RTCB. Together with DDX1, acts by facilitating the guanylylation of RTCB, a key intermediate step in tRNA ligation.</text>
</comment>
<comment type="subunit">
    <text evidence="2">Component of the tRNA-splicing ligase complex.</text>
</comment>
<comment type="interaction">
    <interactant intactId="EBI-2808825">
        <id>Q8IWT0</id>
    </interactant>
    <interactant intactId="EBI-2107208">
        <id>Q9Y3I0</id>
        <label>RTCB</label>
    </interactant>
    <organismsDiffer>false</organismsDiffer>
    <experiments>2</experiments>
</comment>
<comment type="interaction">
    <interactant intactId="EBI-12956041">
        <id>Q8IWT0-2</id>
    </interactant>
    <interactant intactId="EBI-10988864">
        <id>P46379-2</id>
        <label>BAG6</label>
    </interactant>
    <organismsDiffer>false</organismsDiffer>
    <experiments>3</experiments>
</comment>
<comment type="interaction">
    <interactant intactId="EBI-12956041">
        <id>Q8IWT0-2</id>
    </interactant>
    <interactant intactId="EBI-718729">
        <id>P55212</id>
        <label>CASP6</label>
    </interactant>
    <organismsDiffer>false</organismsDiffer>
    <experiments>3</experiments>
</comment>
<comment type="interaction">
    <interactant intactId="EBI-12956041">
        <id>Q8IWT0-2</id>
    </interactant>
    <interactant intactId="EBI-6624398">
        <id>P06307</id>
        <label>CCK</label>
    </interactant>
    <organismsDiffer>false</organismsDiffer>
    <experiments>3</experiments>
</comment>
<comment type="interaction">
    <interactant intactId="EBI-12956041">
        <id>Q8IWT0-2</id>
    </interactant>
    <interactant intactId="EBI-751540">
        <id>O95872</id>
        <label>GPANK1</label>
    </interactant>
    <organismsDiffer>false</organismsDiffer>
    <experiments>3</experiments>
</comment>
<comment type="interaction">
    <interactant intactId="EBI-12956041">
        <id>Q8IWT0-2</id>
    </interactant>
    <interactant intactId="EBI-473886">
        <id>O00291</id>
        <label>HIP1</label>
    </interactant>
    <organismsDiffer>false</organismsDiffer>
    <experiments>3</experiments>
</comment>
<comment type="interaction">
    <interactant intactId="EBI-12956041">
        <id>Q8IWT0-2</id>
    </interactant>
    <interactant intactId="EBI-948266">
        <id>O14901</id>
        <label>KLF11</label>
    </interactant>
    <organismsDiffer>false</organismsDiffer>
    <experiments>3</experiments>
</comment>
<comment type="interaction">
    <interactant intactId="EBI-12956041">
        <id>Q8IWT0-2</id>
    </interactant>
    <interactant intactId="EBI-21591415">
        <id>P13473-2</id>
        <label>LAMP2</label>
    </interactant>
    <organismsDiffer>false</organismsDiffer>
    <experiments>3</experiments>
</comment>
<comment type="interaction">
    <interactant intactId="EBI-12956041">
        <id>Q8IWT0-2</id>
    </interactant>
    <interactant intactId="EBI-2811583">
        <id>Q9BVL2</id>
        <label>NUP58</label>
    </interactant>
    <organismsDiffer>false</organismsDiffer>
    <experiments>3</experiments>
</comment>
<comment type="interaction">
    <interactant intactId="EBI-12956041">
        <id>Q8IWT0-2</id>
    </interactant>
    <interactant intactId="EBI-5280197">
        <id>O75400-2</id>
        <label>PRPF40A</label>
    </interactant>
    <organismsDiffer>false</organismsDiffer>
    <experiments>3</experiments>
</comment>
<comment type="interaction">
    <interactant intactId="EBI-12956041">
        <id>Q8IWT0-2</id>
    </interactant>
    <interactant intactId="EBI-286642">
        <id>P62826</id>
        <label>RAN</label>
    </interactant>
    <organismsDiffer>false</organismsDiffer>
    <experiments>3</experiments>
</comment>
<comment type="alternative products">
    <event type="alternative splicing"/>
    <isoform>
        <id>Q8IWT0-1</id>
        <name>1</name>
        <sequence type="displayed"/>
    </isoform>
    <isoform>
        <id>Q8IWT0-2</id>
        <name>2</name>
        <sequence type="described" ref="VSP_024926"/>
    </isoform>
</comment>
<comment type="similarity">
    <text evidence="5">Belongs to the archease family.</text>
</comment>
<comment type="sequence caution" evidence="5">
    <conflict type="erroneous initiation">
        <sequence resource="EMBL-CDS" id="AAM34477"/>
    </conflict>
</comment>
<comment type="sequence caution" evidence="5">
    <conflict type="erroneous initiation">
        <sequence resource="EMBL-CDS" id="AAN75223"/>
    </conflict>
</comment>
<comment type="sequence caution" evidence="5">
    <conflict type="erroneous initiation">
        <sequence resource="EMBL-CDS" id="AAN75224"/>
    </conflict>
</comment>
<dbReference type="EMBL" id="AY099493">
    <property type="protein sequence ID" value="AAM34477.1"/>
    <property type="status" value="ALT_INIT"/>
    <property type="molecule type" value="mRNA"/>
</dbReference>
<dbReference type="EMBL" id="AY099494">
    <property type="protein sequence ID" value="AAM34478.1"/>
    <property type="molecule type" value="mRNA"/>
</dbReference>
<dbReference type="EMBL" id="AY151084">
    <property type="protein sequence ID" value="AAN75223.1"/>
    <property type="status" value="ALT_INIT"/>
    <property type="molecule type" value="mRNA"/>
</dbReference>
<dbReference type="EMBL" id="AY151085">
    <property type="protein sequence ID" value="AAN75224.1"/>
    <property type="status" value="ALT_INIT"/>
    <property type="molecule type" value="mRNA"/>
</dbReference>
<dbReference type="EMBL" id="AC114489">
    <property type="status" value="NOT_ANNOTATED_CDS"/>
    <property type="molecule type" value="Genomic_DNA"/>
</dbReference>
<dbReference type="EMBL" id="AL033529">
    <property type="status" value="NOT_ANNOTATED_CDS"/>
    <property type="molecule type" value="Genomic_DNA"/>
</dbReference>
<dbReference type="EMBL" id="BC058843">
    <property type="protein sequence ID" value="AAH58843.1"/>
    <property type="molecule type" value="mRNA"/>
</dbReference>
<dbReference type="CCDS" id="CCDS365.2">
    <molecule id="Q8IWT0-1"/>
</dbReference>
<dbReference type="RefSeq" id="NP_001295065.1">
    <property type="nucleotide sequence ID" value="NM_001308136.1"/>
</dbReference>
<dbReference type="RefSeq" id="NP_001295068.1">
    <property type="nucleotide sequence ID" value="NM_001308139.1"/>
</dbReference>
<dbReference type="RefSeq" id="NP_848642.2">
    <molecule id="Q8IWT0-1"/>
    <property type="nucleotide sequence ID" value="NM_178547.5"/>
</dbReference>
<dbReference type="SMR" id="Q8IWT0"/>
<dbReference type="BioGRID" id="130893">
    <property type="interactions" value="16"/>
</dbReference>
<dbReference type="ComplexPortal" id="CPX-6411">
    <property type="entry name" value="tRNA-splicing ligase complex"/>
</dbReference>
<dbReference type="CORUM" id="Q8IWT0"/>
<dbReference type="DIP" id="DIP-61031N"/>
<dbReference type="FunCoup" id="Q8IWT0">
    <property type="interactions" value="1225"/>
</dbReference>
<dbReference type="IntAct" id="Q8IWT0">
    <property type="interactions" value="16"/>
</dbReference>
<dbReference type="STRING" id="9606.ENSP00000417677"/>
<dbReference type="ChEMBL" id="CHEMBL5069379"/>
<dbReference type="iPTMnet" id="Q8IWT0"/>
<dbReference type="PhosphoSitePlus" id="Q8IWT0"/>
<dbReference type="BioMuta" id="ZBTB8OS"/>
<dbReference type="DMDM" id="146286037"/>
<dbReference type="jPOST" id="Q8IWT0"/>
<dbReference type="MassIVE" id="Q8IWT0"/>
<dbReference type="PaxDb" id="9606-ENSP00000417677"/>
<dbReference type="PeptideAtlas" id="Q8IWT0"/>
<dbReference type="ProteomicsDB" id="70887">
    <molecule id="Q8IWT0-1"/>
</dbReference>
<dbReference type="ProteomicsDB" id="70888">
    <molecule id="Q8IWT0-2"/>
</dbReference>
<dbReference type="Pumba" id="Q8IWT0"/>
<dbReference type="TopDownProteomics" id="Q8IWT0-1">
    <molecule id="Q8IWT0-1"/>
</dbReference>
<dbReference type="TopDownProteomics" id="Q8IWT0-2">
    <molecule id="Q8IWT0-2"/>
</dbReference>
<dbReference type="Antibodypedia" id="54681">
    <property type="antibodies" value="48 antibodies from 14 providers"/>
</dbReference>
<dbReference type="DNASU" id="339487"/>
<dbReference type="Ensembl" id="ENST00000436661.6">
    <molecule id="Q8IWT0-2"/>
    <property type="protein sequence ID" value="ENSP00000413485.2"/>
    <property type="gene ID" value="ENSG00000176261.16"/>
</dbReference>
<dbReference type="Ensembl" id="ENST00000468695.6">
    <molecule id="Q8IWT0-1"/>
    <property type="protein sequence ID" value="ENSP00000417677.2"/>
    <property type="gene ID" value="ENSG00000176261.16"/>
</dbReference>
<dbReference type="GeneID" id="339487"/>
<dbReference type="KEGG" id="hsa:339487"/>
<dbReference type="MANE-Select" id="ENST00000468695.6">
    <property type="protein sequence ID" value="ENSP00000417677.2"/>
    <property type="RefSeq nucleotide sequence ID" value="NM_178547.5"/>
    <property type="RefSeq protein sequence ID" value="NP_848642.2"/>
</dbReference>
<dbReference type="UCSC" id="uc057elg.1">
    <molecule id="Q8IWT0-1"/>
    <property type="organism name" value="human"/>
</dbReference>
<dbReference type="AGR" id="HGNC:24094"/>
<dbReference type="CTD" id="339487"/>
<dbReference type="DisGeNET" id="339487"/>
<dbReference type="GeneCards" id="ZBTB8OS"/>
<dbReference type="HGNC" id="HGNC:24094">
    <property type="gene designation" value="ZBTB8OS"/>
</dbReference>
<dbReference type="HPA" id="ENSG00000176261">
    <property type="expression patterns" value="Low tissue specificity"/>
</dbReference>
<dbReference type="neXtProt" id="NX_Q8IWT0"/>
<dbReference type="PharmGKB" id="PA142670540"/>
<dbReference type="VEuPathDB" id="HostDB:ENSG00000176261"/>
<dbReference type="eggNOG" id="KOG4528">
    <property type="taxonomic scope" value="Eukaryota"/>
</dbReference>
<dbReference type="GeneTree" id="ENSGT00390000003245"/>
<dbReference type="InParanoid" id="Q8IWT0"/>
<dbReference type="OrthoDB" id="2190767at2759"/>
<dbReference type="PAN-GO" id="Q8IWT0">
    <property type="GO annotations" value="2 GO annotations based on evolutionary models"/>
</dbReference>
<dbReference type="PhylomeDB" id="Q8IWT0"/>
<dbReference type="BioCyc" id="MetaCyc:ENSG00000176261-MONOMER"/>
<dbReference type="PathwayCommons" id="Q8IWT0"/>
<dbReference type="Reactome" id="R-HSA-6784531">
    <property type="pathway name" value="tRNA processing in the nucleus"/>
</dbReference>
<dbReference type="SignaLink" id="Q8IWT0"/>
<dbReference type="BioGRID-ORCS" id="339487">
    <property type="hits" value="450 hits in 1177 CRISPR screens"/>
</dbReference>
<dbReference type="ChiTaRS" id="ZBTB8OS">
    <property type="organism name" value="human"/>
</dbReference>
<dbReference type="GenomeRNAi" id="339487"/>
<dbReference type="Pharos" id="Q8IWT0">
    <property type="development level" value="Tbio"/>
</dbReference>
<dbReference type="PRO" id="PR:Q8IWT0"/>
<dbReference type="Proteomes" id="UP000005640">
    <property type="component" value="Chromosome 1"/>
</dbReference>
<dbReference type="RNAct" id="Q8IWT0">
    <property type="molecule type" value="protein"/>
</dbReference>
<dbReference type="Bgee" id="ENSG00000176261">
    <property type="expression patterns" value="Expressed in monocyte and 180 other cell types or tissues"/>
</dbReference>
<dbReference type="ExpressionAtlas" id="Q8IWT0">
    <property type="expression patterns" value="baseline and differential"/>
</dbReference>
<dbReference type="GO" id="GO:0005737">
    <property type="term" value="C:cytoplasm"/>
    <property type="evidence" value="ECO:0000303"/>
    <property type="project" value="ComplexPortal"/>
</dbReference>
<dbReference type="GO" id="GO:0005654">
    <property type="term" value="C:nucleoplasm"/>
    <property type="evidence" value="ECO:0000304"/>
    <property type="project" value="Reactome"/>
</dbReference>
<dbReference type="GO" id="GO:0005634">
    <property type="term" value="C:nucleus"/>
    <property type="evidence" value="ECO:0000303"/>
    <property type="project" value="ComplexPortal"/>
</dbReference>
<dbReference type="GO" id="GO:0072669">
    <property type="term" value="C:tRNA-splicing ligase complex"/>
    <property type="evidence" value="ECO:0000314"/>
    <property type="project" value="UniProtKB"/>
</dbReference>
<dbReference type="GO" id="GO:0046872">
    <property type="term" value="F:metal ion binding"/>
    <property type="evidence" value="ECO:0007669"/>
    <property type="project" value="UniProtKB-KW"/>
</dbReference>
<dbReference type="GO" id="GO:0006388">
    <property type="term" value="P:tRNA splicing, via endonucleolytic cleavage and ligation"/>
    <property type="evidence" value="ECO:0000314"/>
    <property type="project" value="UniProtKB"/>
</dbReference>
<dbReference type="FunFam" id="3.55.10.10:FF:000001">
    <property type="entry name" value="protein archease isoform X1"/>
    <property type="match status" value="1"/>
</dbReference>
<dbReference type="Gene3D" id="3.55.10.10">
    <property type="entry name" value="Archease domain"/>
    <property type="match status" value="1"/>
</dbReference>
<dbReference type="InterPro" id="IPR002804">
    <property type="entry name" value="Archease"/>
</dbReference>
<dbReference type="InterPro" id="IPR023572">
    <property type="entry name" value="Archease_dom"/>
</dbReference>
<dbReference type="InterPro" id="IPR036820">
    <property type="entry name" value="Archease_dom_sf"/>
</dbReference>
<dbReference type="PANTHER" id="PTHR12682">
    <property type="entry name" value="ARCHEASE"/>
    <property type="match status" value="1"/>
</dbReference>
<dbReference type="PANTHER" id="PTHR12682:SF11">
    <property type="entry name" value="PROTEIN ARCHEASE"/>
    <property type="match status" value="1"/>
</dbReference>
<dbReference type="Pfam" id="PF01951">
    <property type="entry name" value="Archease"/>
    <property type="match status" value="1"/>
</dbReference>
<dbReference type="SUPFAM" id="SSF69819">
    <property type="entry name" value="MTH1598-like"/>
    <property type="match status" value="1"/>
</dbReference>
<reference key="1">
    <citation type="submission" date="2002-09" db="EMBL/GenBank/DDBJ databases">
        <title>Structure, expression and sequence comparison of human and murine archease.</title>
        <authorList>
            <person name="Alliel P.M."/>
            <person name="Goudou D."/>
            <person name="Bitoun M."/>
            <person name="Langlois C."/>
            <person name="Rieger F."/>
            <person name="Seddiqi N."/>
            <person name="Perin J.P."/>
        </authorList>
    </citation>
    <scope>NUCLEOTIDE SEQUENCE [MRNA] (ISOFORMS 1 AND 2)</scope>
</reference>
<reference key="2">
    <citation type="journal article" date="2006" name="Nature">
        <title>The DNA sequence and biological annotation of human chromosome 1.</title>
        <authorList>
            <person name="Gregory S.G."/>
            <person name="Barlow K.F."/>
            <person name="McLay K.E."/>
            <person name="Kaul R."/>
            <person name="Swarbreck D."/>
            <person name="Dunham A."/>
            <person name="Scott C.E."/>
            <person name="Howe K.L."/>
            <person name="Woodfine K."/>
            <person name="Spencer C.C.A."/>
            <person name="Jones M.C."/>
            <person name="Gillson C."/>
            <person name="Searle S."/>
            <person name="Zhou Y."/>
            <person name="Kokocinski F."/>
            <person name="McDonald L."/>
            <person name="Evans R."/>
            <person name="Phillips K."/>
            <person name="Atkinson A."/>
            <person name="Cooper R."/>
            <person name="Jones C."/>
            <person name="Hall R.E."/>
            <person name="Andrews T.D."/>
            <person name="Lloyd C."/>
            <person name="Ainscough R."/>
            <person name="Almeida J.P."/>
            <person name="Ambrose K.D."/>
            <person name="Anderson F."/>
            <person name="Andrew R.W."/>
            <person name="Ashwell R.I.S."/>
            <person name="Aubin K."/>
            <person name="Babbage A.K."/>
            <person name="Bagguley C.L."/>
            <person name="Bailey J."/>
            <person name="Beasley H."/>
            <person name="Bethel G."/>
            <person name="Bird C.P."/>
            <person name="Bray-Allen S."/>
            <person name="Brown J.Y."/>
            <person name="Brown A.J."/>
            <person name="Buckley D."/>
            <person name="Burton J."/>
            <person name="Bye J."/>
            <person name="Carder C."/>
            <person name="Chapman J.C."/>
            <person name="Clark S.Y."/>
            <person name="Clarke G."/>
            <person name="Clee C."/>
            <person name="Cobley V."/>
            <person name="Collier R.E."/>
            <person name="Corby N."/>
            <person name="Coville G.J."/>
            <person name="Davies J."/>
            <person name="Deadman R."/>
            <person name="Dunn M."/>
            <person name="Earthrowl M."/>
            <person name="Ellington A.G."/>
            <person name="Errington H."/>
            <person name="Frankish A."/>
            <person name="Frankland J."/>
            <person name="French L."/>
            <person name="Garner P."/>
            <person name="Garnett J."/>
            <person name="Gay L."/>
            <person name="Ghori M.R.J."/>
            <person name="Gibson R."/>
            <person name="Gilby L.M."/>
            <person name="Gillett W."/>
            <person name="Glithero R.J."/>
            <person name="Grafham D.V."/>
            <person name="Griffiths C."/>
            <person name="Griffiths-Jones S."/>
            <person name="Grocock R."/>
            <person name="Hammond S."/>
            <person name="Harrison E.S.I."/>
            <person name="Hart E."/>
            <person name="Haugen E."/>
            <person name="Heath P.D."/>
            <person name="Holmes S."/>
            <person name="Holt K."/>
            <person name="Howden P.J."/>
            <person name="Hunt A.R."/>
            <person name="Hunt S.E."/>
            <person name="Hunter G."/>
            <person name="Isherwood J."/>
            <person name="James R."/>
            <person name="Johnson C."/>
            <person name="Johnson D."/>
            <person name="Joy A."/>
            <person name="Kay M."/>
            <person name="Kershaw J.K."/>
            <person name="Kibukawa M."/>
            <person name="Kimberley A.M."/>
            <person name="King A."/>
            <person name="Knights A.J."/>
            <person name="Lad H."/>
            <person name="Laird G."/>
            <person name="Lawlor S."/>
            <person name="Leongamornlert D.A."/>
            <person name="Lloyd D.M."/>
            <person name="Loveland J."/>
            <person name="Lovell J."/>
            <person name="Lush M.J."/>
            <person name="Lyne R."/>
            <person name="Martin S."/>
            <person name="Mashreghi-Mohammadi M."/>
            <person name="Matthews L."/>
            <person name="Matthews N.S.W."/>
            <person name="McLaren S."/>
            <person name="Milne S."/>
            <person name="Mistry S."/>
            <person name="Moore M.J.F."/>
            <person name="Nickerson T."/>
            <person name="O'Dell C.N."/>
            <person name="Oliver K."/>
            <person name="Palmeiri A."/>
            <person name="Palmer S.A."/>
            <person name="Parker A."/>
            <person name="Patel D."/>
            <person name="Pearce A.V."/>
            <person name="Peck A.I."/>
            <person name="Pelan S."/>
            <person name="Phelps K."/>
            <person name="Phillimore B.J."/>
            <person name="Plumb R."/>
            <person name="Rajan J."/>
            <person name="Raymond C."/>
            <person name="Rouse G."/>
            <person name="Saenphimmachak C."/>
            <person name="Sehra H.K."/>
            <person name="Sheridan E."/>
            <person name="Shownkeen R."/>
            <person name="Sims S."/>
            <person name="Skuce C.D."/>
            <person name="Smith M."/>
            <person name="Steward C."/>
            <person name="Subramanian S."/>
            <person name="Sycamore N."/>
            <person name="Tracey A."/>
            <person name="Tromans A."/>
            <person name="Van Helmond Z."/>
            <person name="Wall M."/>
            <person name="Wallis J.M."/>
            <person name="White S."/>
            <person name="Whitehead S.L."/>
            <person name="Wilkinson J.E."/>
            <person name="Willey D.L."/>
            <person name="Williams H."/>
            <person name="Wilming L."/>
            <person name="Wray P.W."/>
            <person name="Wu Z."/>
            <person name="Coulson A."/>
            <person name="Vaudin M."/>
            <person name="Sulston J.E."/>
            <person name="Durbin R.M."/>
            <person name="Hubbard T."/>
            <person name="Wooster R."/>
            <person name="Dunham I."/>
            <person name="Carter N.P."/>
            <person name="McVean G."/>
            <person name="Ross M.T."/>
            <person name="Harrow J."/>
            <person name="Olson M.V."/>
            <person name="Beck S."/>
            <person name="Rogers J."/>
            <person name="Bentley D.R."/>
        </authorList>
    </citation>
    <scope>NUCLEOTIDE SEQUENCE [LARGE SCALE GENOMIC DNA]</scope>
</reference>
<reference key="3">
    <citation type="journal article" date="2004" name="Genome Res.">
        <title>The status, quality, and expansion of the NIH full-length cDNA project: the Mammalian Gene Collection (MGC).</title>
        <authorList>
            <consortium name="The MGC Project Team"/>
        </authorList>
    </citation>
    <scope>NUCLEOTIDE SEQUENCE [LARGE SCALE MRNA] (ISOFORM 2)</scope>
</reference>
<reference key="4">
    <citation type="journal article" date="2004" name="Proteins">
        <title>Predicted role for the archease protein family based on structural and sequence analysis of TM1083 and MTH1598, two proteins structurally characterized through structural genomics efforts.</title>
        <authorList>
            <person name="Canaves J.M."/>
        </authorList>
    </citation>
    <scope>IDENTIFICATION</scope>
</reference>
<reference key="5">
    <citation type="journal article" date="2009" name="Anal. Chem.">
        <title>Lys-N and trypsin cover complementary parts of the phosphoproteome in a refined SCX-based approach.</title>
        <authorList>
            <person name="Gauci S."/>
            <person name="Helbig A.O."/>
            <person name="Slijper M."/>
            <person name="Krijgsveld J."/>
            <person name="Heck A.J."/>
            <person name="Mohammed S."/>
        </authorList>
    </citation>
    <scope>ACETYLATION [LARGE SCALE ANALYSIS] AT ALA-2</scope>
    <scope>CLEAVAGE OF INITIATOR METHIONINE [LARGE SCALE ANALYSIS]</scope>
    <scope>IDENTIFICATION BY MASS SPECTROMETRY [LARGE SCALE ANALYSIS]</scope>
</reference>
<reference key="6">
    <citation type="journal article" date="2011" name="BMC Syst. Biol.">
        <title>Initial characterization of the human central proteome.</title>
        <authorList>
            <person name="Burkard T.R."/>
            <person name="Planyavsky M."/>
            <person name="Kaupe I."/>
            <person name="Breitwieser F.P."/>
            <person name="Buerckstuemmer T."/>
            <person name="Bennett K.L."/>
            <person name="Superti-Furga G."/>
            <person name="Colinge J."/>
        </authorList>
    </citation>
    <scope>IDENTIFICATION BY MASS SPECTROMETRY [LARGE SCALE ANALYSIS]</scope>
</reference>
<reference key="7">
    <citation type="journal article" date="2014" name="Nature">
        <title>Analysis of orthologous groups reveals archease and DDX1 as tRNA splicing factors.</title>
        <authorList>
            <person name="Popow J."/>
            <person name="Jurkin J."/>
            <person name="Schleiffer A."/>
            <person name="Martinez J."/>
        </authorList>
    </citation>
    <scope>FUNCTION</scope>
    <scope>IDENTIFICATION IN THE TRNA SPLICING LIGASE COMPLEX</scope>
    <scope>MUTAGENESIS OF ASP-39 AND LYS-144</scope>
</reference>
<name>ARCH_HUMAN</name>
<feature type="initiator methionine" description="Removed" evidence="6">
    <location>
        <position position="1"/>
    </location>
</feature>
<feature type="chain" id="PRO_0000285950" description="Protein archease">
    <location>
        <begin position="2"/>
        <end position="167"/>
    </location>
</feature>
<feature type="binding site" evidence="1">
    <location>
        <position position="39"/>
    </location>
    <ligand>
        <name>Ca(2+)</name>
        <dbReference type="ChEBI" id="CHEBI:29108"/>
    </ligand>
</feature>
<feature type="binding site" evidence="1">
    <location>
        <position position="166"/>
    </location>
    <ligand>
        <name>Ca(2+)</name>
        <dbReference type="ChEBI" id="CHEBI:29108"/>
    </ligand>
</feature>
<feature type="binding site" evidence="1">
    <location>
        <position position="167"/>
    </location>
    <ligand>
        <name>Ca(2+)</name>
        <dbReference type="ChEBI" id="CHEBI:29108"/>
    </ligand>
</feature>
<feature type="modified residue" description="N-acetylalanine" evidence="6">
    <location>
        <position position="2"/>
    </location>
</feature>
<feature type="splice variant" id="VSP_024926" description="In isoform 2." evidence="3 4">
    <original>EVKVLSIDQRNFKLRSIGWGEEFSLSKHPQGTEVKAITYSAMQVYNEENPEVFVIIDI</original>
    <variation>VGRRIFIVQAPSGNRSQSNNIFSNAGL</variation>
    <location>
        <begin position="110"/>
        <end position="167"/>
    </location>
</feature>
<feature type="mutagenesis site" description="Abolishes ability to activate tRNA ligase activity of RTCB." evidence="2">
    <original>D</original>
    <variation>A</variation>
    <location>
        <position position="39"/>
    </location>
</feature>
<feature type="mutagenesis site" description="Abolishes ability to activate tRNA ligase activity of RTCB." evidence="2">
    <original>K</original>
    <variation>A</variation>
    <location>
        <position position="144"/>
    </location>
</feature>
<feature type="sequence conflict" description="In Ref. 1; AAM34478." evidence="5" ref="1">
    <original>E</original>
    <variation>V</variation>
    <location>
        <position position="51"/>
    </location>
</feature>
<feature type="sequence conflict" description="In Ref. 1; AAM34478." evidence="5" ref="1">
    <original>V</original>
    <variation>A</variation>
    <location>
        <position position="76"/>
    </location>
</feature>
<feature type="sequence conflict" description="In Ref. 1; AAM34478." evidence="5" ref="1">
    <original>L</original>
    <variation>S</variation>
    <location>
        <position position="93"/>
    </location>
</feature>
<feature type="sequence conflict" description="In Ref. 1; AAM34478." evidence="5" ref="1">
    <original>R</original>
    <variation>G</variation>
    <location>
        <position position="119"/>
    </location>
</feature>
<feature type="sequence conflict" description="In Ref. 1; AAM34478." evidence="5" ref="1">
    <original>H</original>
    <variation>R</variation>
    <location>
        <position position="137"/>
    </location>
</feature>
<proteinExistence type="evidence at protein level"/>